<comment type="function">
    <text evidence="1">Involved in biosynthesis of the thiamine precursor thiazole. Catalyzes the conversion of NAD and glycine to adenosine diphosphate 5-(2-hydroxyethyl)-4-methylthiazole-2-carboxylic acid (ADT), an adenylated thiazole intermediate. The reaction includes an iron-dependent sulfide transfer from a conserved cysteine residue of the protein to a thiazole intermediate. The enzyme can only undergo a single turnover, which suggests it is a suicide enzyme. May have additional roles in adaptation to various stress conditions and in DNA damage tolerance.</text>
</comment>
<comment type="catalytic activity">
    <reaction evidence="1">
        <text>[ADP-thiazole synthase]-L-cysteine + glycine + NAD(+) = [ADP-thiazole synthase]-dehydroalanine + ADP-5-ethyl-4-methylthiazole-2-carboxylate + nicotinamide + 3 H2O + 2 H(+)</text>
        <dbReference type="Rhea" id="RHEA:55708"/>
        <dbReference type="Rhea" id="RHEA-COMP:14264"/>
        <dbReference type="Rhea" id="RHEA-COMP:14265"/>
        <dbReference type="ChEBI" id="CHEBI:15377"/>
        <dbReference type="ChEBI" id="CHEBI:15378"/>
        <dbReference type="ChEBI" id="CHEBI:17154"/>
        <dbReference type="ChEBI" id="CHEBI:29950"/>
        <dbReference type="ChEBI" id="CHEBI:57305"/>
        <dbReference type="ChEBI" id="CHEBI:57540"/>
        <dbReference type="ChEBI" id="CHEBI:90873"/>
        <dbReference type="ChEBI" id="CHEBI:139151"/>
        <dbReference type="EC" id="2.4.2.60"/>
    </reaction>
</comment>
<comment type="cofactor">
    <cofactor evidence="1">
        <name>Fe cation</name>
        <dbReference type="ChEBI" id="CHEBI:24875"/>
    </cofactor>
    <text evidence="1">Binds 1 Fe cation per subunit.</text>
</comment>
<comment type="subunit">
    <text evidence="1">Homooctamer.</text>
</comment>
<comment type="subcellular location">
    <subcellularLocation>
        <location evidence="1">Cytoplasm</location>
    </subcellularLocation>
    <subcellularLocation>
        <location evidence="1">Nucleus</location>
    </subcellularLocation>
</comment>
<comment type="PTM">
    <text evidence="1">During the catalytic reaction, a sulfide is transferred from Cys-218 to a reaction intermediate, generating a dehydroalanine residue.</text>
</comment>
<comment type="similarity">
    <text evidence="1">Belongs to the THI4 family.</text>
</comment>
<evidence type="ECO:0000255" key="1">
    <source>
        <dbReference type="HAMAP-Rule" id="MF_03158"/>
    </source>
</evidence>
<organism>
    <name type="scientific">Phaeosphaeria nodorum (strain SN15 / ATCC MYA-4574 / FGSC 10173)</name>
    <name type="common">Glume blotch fungus</name>
    <name type="synonym">Parastagonospora nodorum</name>
    <dbReference type="NCBI Taxonomy" id="321614"/>
    <lineage>
        <taxon>Eukaryota</taxon>
        <taxon>Fungi</taxon>
        <taxon>Dikarya</taxon>
        <taxon>Ascomycota</taxon>
        <taxon>Pezizomycotina</taxon>
        <taxon>Dothideomycetes</taxon>
        <taxon>Pleosporomycetidae</taxon>
        <taxon>Pleosporales</taxon>
        <taxon>Pleosporineae</taxon>
        <taxon>Phaeosphaeriaceae</taxon>
        <taxon>Parastagonospora</taxon>
    </lineage>
</organism>
<name>THI4_PHANO</name>
<keyword id="KW-0963">Cytoplasm</keyword>
<keyword id="KW-0408">Iron</keyword>
<keyword id="KW-0479">Metal-binding</keyword>
<keyword id="KW-0520">NAD</keyword>
<keyword id="KW-0539">Nucleus</keyword>
<keyword id="KW-0784">Thiamine biosynthesis</keyword>
<keyword id="KW-0808">Transferase</keyword>
<dbReference type="EC" id="2.4.2.60" evidence="1"/>
<dbReference type="EMBL" id="CH445332">
    <property type="protein sequence ID" value="EAT87029.1"/>
    <property type="molecule type" value="Genomic_DNA"/>
</dbReference>
<dbReference type="RefSeq" id="XP_001796354.1">
    <property type="nucleotide sequence ID" value="XM_001796302.1"/>
</dbReference>
<dbReference type="SMR" id="Q0UQJ9"/>
<dbReference type="FunCoup" id="Q0UQJ9">
    <property type="interactions" value="789"/>
</dbReference>
<dbReference type="STRING" id="321614.Q0UQJ9"/>
<dbReference type="EnsemblFungi" id="SNOT_05965">
    <property type="protein sequence ID" value="SNOT_05965"/>
    <property type="gene ID" value="SNOG_05965"/>
</dbReference>
<dbReference type="GeneID" id="5973231"/>
<dbReference type="KEGG" id="pno:SNOG_05965"/>
<dbReference type="VEuPathDB" id="FungiDB:JI435_059650"/>
<dbReference type="eggNOG" id="KOG2960">
    <property type="taxonomic scope" value="Eukaryota"/>
</dbReference>
<dbReference type="HOGENOM" id="CLU_053727_0_0_1"/>
<dbReference type="InParanoid" id="Q0UQJ9"/>
<dbReference type="OMA" id="MFPRIVV"/>
<dbReference type="Proteomes" id="UP000001055">
    <property type="component" value="Unassembled WGS sequence"/>
</dbReference>
<dbReference type="GO" id="GO:0005829">
    <property type="term" value="C:cytosol"/>
    <property type="evidence" value="ECO:0007669"/>
    <property type="project" value="UniProtKB-UniRule"/>
</dbReference>
<dbReference type="GO" id="GO:0005634">
    <property type="term" value="C:nucleus"/>
    <property type="evidence" value="ECO:0007669"/>
    <property type="project" value="UniProtKB-SubCell"/>
</dbReference>
<dbReference type="GO" id="GO:0160205">
    <property type="term" value="F:cysteine-dependent adenosine diphosphate thiazole synthase activity"/>
    <property type="evidence" value="ECO:0007669"/>
    <property type="project" value="UniProtKB-EC"/>
</dbReference>
<dbReference type="GO" id="GO:0008198">
    <property type="term" value="F:ferrous iron binding"/>
    <property type="evidence" value="ECO:0007669"/>
    <property type="project" value="EnsemblFungi"/>
</dbReference>
<dbReference type="GO" id="GO:0005506">
    <property type="term" value="F:iron ion binding"/>
    <property type="evidence" value="ECO:0000318"/>
    <property type="project" value="GO_Central"/>
</dbReference>
<dbReference type="GO" id="GO:0000002">
    <property type="term" value="P:mitochondrial genome maintenance"/>
    <property type="evidence" value="ECO:0007669"/>
    <property type="project" value="EnsemblFungi"/>
</dbReference>
<dbReference type="GO" id="GO:0009228">
    <property type="term" value="P:thiamine biosynthetic process"/>
    <property type="evidence" value="ECO:0007669"/>
    <property type="project" value="UniProtKB-UniRule"/>
</dbReference>
<dbReference type="GO" id="GO:0052837">
    <property type="term" value="P:thiazole biosynthetic process"/>
    <property type="evidence" value="ECO:0000318"/>
    <property type="project" value="GO_Central"/>
</dbReference>
<dbReference type="Gene3D" id="6.10.250.2840">
    <property type="match status" value="1"/>
</dbReference>
<dbReference type="Gene3D" id="3.50.50.60">
    <property type="entry name" value="FAD/NAD(P)-binding domain"/>
    <property type="match status" value="1"/>
</dbReference>
<dbReference type="HAMAP" id="MF_03158">
    <property type="entry name" value="THI4"/>
    <property type="match status" value="1"/>
</dbReference>
<dbReference type="InterPro" id="IPR036188">
    <property type="entry name" value="FAD/NAD-bd_sf"/>
</dbReference>
<dbReference type="InterPro" id="IPR027495">
    <property type="entry name" value="Sti35"/>
</dbReference>
<dbReference type="InterPro" id="IPR002922">
    <property type="entry name" value="Thi4_fam"/>
</dbReference>
<dbReference type="NCBIfam" id="TIGR00292">
    <property type="entry name" value="sulfide-dependent adenosine diphosphate thiazole synthase"/>
    <property type="match status" value="1"/>
</dbReference>
<dbReference type="PANTHER" id="PTHR43422">
    <property type="entry name" value="THIAMINE THIAZOLE SYNTHASE"/>
    <property type="match status" value="1"/>
</dbReference>
<dbReference type="PANTHER" id="PTHR43422:SF3">
    <property type="entry name" value="THIAMINE THIAZOLE SYNTHASE"/>
    <property type="match status" value="1"/>
</dbReference>
<dbReference type="Pfam" id="PF01946">
    <property type="entry name" value="Thi4"/>
    <property type="match status" value="1"/>
</dbReference>
<dbReference type="SUPFAM" id="SSF51905">
    <property type="entry name" value="FAD/NAD(P)-binding domain"/>
    <property type="match status" value="1"/>
</dbReference>
<protein>
    <recommendedName>
        <fullName evidence="1">Thiamine thiazole synthase</fullName>
        <ecNumber evidence="1">2.4.2.60</ecNumber>
    </recommendedName>
    <alternativeName>
        <fullName evidence="1">Thiazole biosynthetic enzyme</fullName>
    </alternativeName>
</protein>
<proteinExistence type="inferred from homology"/>
<sequence>MSPPAATFDIPVANTGNGLSLKKDLAVKPAASGVAKSLAEIEHNWEKFTFAPIRESQVSRAMTRRYFNDLDTYAESDVVIIGAGSCGLSAAYTLASKRPDLKIAMVEAGVAPGGGAWLGGQLFSAMVMRKPAELFLNEIGVPYEDEGDFVVVKHAALFTSTLMSKVLNFPNVKLFNATAVEDLITRPAPTSNDPNAVRIAGVVTNWTLVSMHHDDQSCMDPNTINAPLIISTTGHDGPFGAFSVKRLVSMQQLPQLGGMRGLDMRTAEDAIVKRTREVVPGLIVGGMELSEVDGANRMGPTFGAMVLSGVKAAEEAIGVWDERKAQNDE</sequence>
<gene>
    <name type="ORF">SNOG_05965</name>
</gene>
<feature type="chain" id="PRO_0000415878" description="Thiamine thiazole synthase">
    <location>
        <begin position="1"/>
        <end position="329"/>
    </location>
</feature>
<feature type="binding site" evidence="1">
    <location>
        <position position="86"/>
    </location>
    <ligand>
        <name>substrate</name>
    </ligand>
</feature>
<feature type="binding site" evidence="1">
    <location>
        <begin position="107"/>
        <end position="108"/>
    </location>
    <ligand>
        <name>substrate</name>
    </ligand>
</feature>
<feature type="binding site" evidence="1">
    <location>
        <position position="115"/>
    </location>
    <ligand>
        <name>substrate</name>
    </ligand>
</feature>
<feature type="binding site" evidence="1">
    <location>
        <position position="180"/>
    </location>
    <ligand>
        <name>substrate</name>
    </ligand>
</feature>
<feature type="binding site" evidence="1">
    <location>
        <position position="220"/>
    </location>
    <ligand>
        <name>substrate</name>
    </ligand>
</feature>
<feature type="binding site" evidence="1">
    <location>
        <position position="235"/>
    </location>
    <ligand>
        <name>substrate</name>
    </ligand>
</feature>
<feature type="binding site" evidence="1">
    <location>
        <position position="287"/>
    </location>
    <ligand>
        <name>substrate</name>
    </ligand>
</feature>
<feature type="binding site" evidence="1">
    <location>
        <begin position="297"/>
        <end position="299"/>
    </location>
    <ligand>
        <name>substrate</name>
    </ligand>
</feature>
<feature type="modified residue" description="2,3-didehydroalanine (Cys)" evidence="1">
    <location>
        <position position="218"/>
    </location>
</feature>
<accession>Q0UQJ9</accession>
<reference key="1">
    <citation type="journal article" date="2007" name="Plant Cell">
        <title>Dothideomycete-plant interactions illuminated by genome sequencing and EST analysis of the wheat pathogen Stagonospora nodorum.</title>
        <authorList>
            <person name="Hane J.K."/>
            <person name="Lowe R.G.T."/>
            <person name="Solomon P.S."/>
            <person name="Tan K.-C."/>
            <person name="Schoch C.L."/>
            <person name="Spatafora J.W."/>
            <person name="Crous P.W."/>
            <person name="Kodira C.D."/>
            <person name="Birren B.W."/>
            <person name="Galagan J.E."/>
            <person name="Torriani S.F.F."/>
            <person name="McDonald B.A."/>
            <person name="Oliver R.P."/>
        </authorList>
    </citation>
    <scope>NUCLEOTIDE SEQUENCE [LARGE SCALE GENOMIC DNA]</scope>
    <source>
        <strain>SN15 / ATCC MYA-4574 / FGSC 10173</strain>
    </source>
</reference>